<gene>
    <name evidence="4" type="primary">pvhC</name>
</gene>
<accession>A0A3Q9U4Z5</accession>
<organism>
    <name type="scientific">Talaromyces variabilis</name>
    <name type="common">Penicillium variabile</name>
    <dbReference type="NCBI Taxonomy" id="28576"/>
    <lineage>
        <taxon>Eukaryota</taxon>
        <taxon>Fungi</taxon>
        <taxon>Dikarya</taxon>
        <taxon>Ascomycota</taxon>
        <taxon>Pezizomycotina</taxon>
        <taxon>Eurotiomycetes</taxon>
        <taxon>Eurotiomycetidae</taxon>
        <taxon>Eurotiales</taxon>
        <taxon>Trichocomaceae</taxon>
        <taxon>Talaromyces</taxon>
    </lineage>
</organism>
<name>PVHC_TALVA</name>
<proteinExistence type="evidence at protein level"/>
<evidence type="ECO:0000250" key="1">
    <source>
        <dbReference type="UniProtKB" id="Q9Y7D0"/>
    </source>
</evidence>
<evidence type="ECO:0000255" key="2"/>
<evidence type="ECO:0000269" key="3">
    <source>
    </source>
</evidence>
<evidence type="ECO:0000303" key="4">
    <source>
    </source>
</evidence>
<evidence type="ECO:0000305" key="5"/>
<dbReference type="EC" id="1.-.-.-" evidence="3"/>
<dbReference type="EMBL" id="MK376933">
    <property type="protein sequence ID" value="AZZ09612.1"/>
    <property type="molecule type" value="Genomic_DNA"/>
</dbReference>
<dbReference type="SMR" id="A0A3Q9U4Z5"/>
<dbReference type="GO" id="GO:0000166">
    <property type="term" value="F:nucleotide binding"/>
    <property type="evidence" value="ECO:0007669"/>
    <property type="project" value="UniProtKB-KW"/>
</dbReference>
<dbReference type="GO" id="GO:0016651">
    <property type="term" value="F:oxidoreductase activity, acting on NAD(P)H"/>
    <property type="evidence" value="ECO:0007669"/>
    <property type="project" value="InterPro"/>
</dbReference>
<dbReference type="CDD" id="cd08249">
    <property type="entry name" value="enoyl_reductase_like"/>
    <property type="match status" value="1"/>
</dbReference>
<dbReference type="Gene3D" id="3.90.180.10">
    <property type="entry name" value="Medium-chain alcohol dehydrogenases, catalytic domain"/>
    <property type="match status" value="1"/>
</dbReference>
<dbReference type="Gene3D" id="3.40.50.720">
    <property type="entry name" value="NAD(P)-binding Rossmann-like Domain"/>
    <property type="match status" value="1"/>
</dbReference>
<dbReference type="InterPro" id="IPR013149">
    <property type="entry name" value="ADH-like_C"/>
</dbReference>
<dbReference type="InterPro" id="IPR013154">
    <property type="entry name" value="ADH-like_N"/>
</dbReference>
<dbReference type="InterPro" id="IPR011032">
    <property type="entry name" value="GroES-like_sf"/>
</dbReference>
<dbReference type="InterPro" id="IPR036291">
    <property type="entry name" value="NAD(P)-bd_dom_sf"/>
</dbReference>
<dbReference type="InterPro" id="IPR020843">
    <property type="entry name" value="PKS_ER"/>
</dbReference>
<dbReference type="InterPro" id="IPR047122">
    <property type="entry name" value="Trans-enoyl_RdTase-like"/>
</dbReference>
<dbReference type="PANTHER" id="PTHR45348">
    <property type="entry name" value="HYPOTHETICAL OXIDOREDUCTASE (EUROFUNG)"/>
    <property type="match status" value="1"/>
</dbReference>
<dbReference type="PANTHER" id="PTHR45348:SF1">
    <property type="entry name" value="TRANS-ENOYL REDUCTASE STHE"/>
    <property type="match status" value="1"/>
</dbReference>
<dbReference type="Pfam" id="PF08240">
    <property type="entry name" value="ADH_N"/>
    <property type="match status" value="1"/>
</dbReference>
<dbReference type="Pfam" id="PF00107">
    <property type="entry name" value="ADH_zinc_N"/>
    <property type="match status" value="1"/>
</dbReference>
<dbReference type="SMART" id="SM00829">
    <property type="entry name" value="PKS_ER"/>
    <property type="match status" value="1"/>
</dbReference>
<dbReference type="SUPFAM" id="SSF50129">
    <property type="entry name" value="GroES-like"/>
    <property type="match status" value="1"/>
</dbReference>
<dbReference type="SUPFAM" id="SSF51735">
    <property type="entry name" value="NAD(P)-binding Rossmann-fold domains"/>
    <property type="match status" value="1"/>
</dbReference>
<protein>
    <recommendedName>
        <fullName evidence="4">Trans-enoyl reductase pvhC</fullName>
        <shortName evidence="4">ER pvhC</shortName>
        <ecNumber evidence="3">1.-.-.-</ecNumber>
    </recommendedName>
    <alternativeName>
        <fullName evidence="4">Varicidin biosynthesis cluster protein C</fullName>
    </alternativeName>
</protein>
<reference key="1">
    <citation type="journal article" date="2019" name="J. Am. Chem. Soc.">
        <title>Genome-mined Diels-Alderase catalyzes formation of the cis-octahydrodecalins of varicidin A and B.</title>
        <authorList>
            <person name="Tan D."/>
            <person name="Jamieson C.S."/>
            <person name="Ohashi M."/>
            <person name="Tang M.C."/>
            <person name="Houk K.N."/>
            <person name="Tang Y."/>
        </authorList>
    </citation>
    <scope>NUCLEOTIDE SEQUENCE [GENOMIC DNA]</scope>
    <scope>FUNCTION</scope>
    <scope>CATALYTIC ACTIVITY</scope>
    <scope>PATHWAY</scope>
    <source>
        <strain>HXQ-H-1</strain>
    </source>
</reference>
<comment type="function">
    <text evidence="3">Trans-enoyl reductase; part of the gene cluster that mediates the biosynthesis of varicidin A, an antifungal natural product containing a cis-octahydrodecalin core (PubMed:30609896). The PKS module of pvhA together with the enoylreductase pvhC catalyze the formation of the polyketide unit which is then conjugated to L-isoleucine by the condensation domain of the NRPS module (PubMed:30609896). Activity of the Dieckmann cyclase domain (RED) of pvhA results in release of an acyclic tetramate (PubMed:30609896). The cytochrome P450 monooxygenase pvhE then catalyzes the oxidation of the C21 methyl group to a to carboxylate group (PubMed:30609896). The methyltransferase pvhD then further methylates the pvhE product (PubMed:30609896). The Diels-Alderase pvhB is able to catalyze Diels-Alder cycloaddition using both pvhE and pvhD products as substrates to form the decalin ring, yielding varicidin B and A, respectively (PubMed:30609896).</text>
</comment>
<comment type="pathway">
    <text evidence="3">Secondary metabolite biosynthesis.</text>
</comment>
<comment type="subunit">
    <text evidence="1">Monomer.</text>
</comment>
<comment type="similarity">
    <text evidence="5">Belongs to the zinc-containing alcohol dehydrogenase family.</text>
</comment>
<keyword id="KW-0521">NADP</keyword>
<keyword id="KW-0547">Nucleotide-binding</keyword>
<keyword id="KW-0560">Oxidoreductase</keyword>
<sequence length="358" mass="38438">MPSRTQNIQSAWIGTTDGGSRLAHDAPIPAIARERVLIKTKAVSVSPVDSKLVGPYVTPNAVAGFDFSGIVEELGPEATKCGLKVGDRVCSAVVGMNPADPTIGAFAEYTAAVEWILLKLPPSITFEQGATLGISFLTSGLALFRSLGIPGRPLEPAPKPLCILVYGGSSSCGTASLQLLREAGHIPITTCSPHNFELVKSYGAVDAFDYNDPDTMDKIKKYTKNGLRYALDCISTTSSMQFCYKVIGRAGGKYTSLEPFSAAVAQTRKVVSPDWVMGPSLLGQEVAWPEPHYRKQDDDLAQFGAEWTATLNQLLKKELIKPHPMQIRDGGLENIQQGLEDLRAKKVSGAKIVYPLGS</sequence>
<feature type="chain" id="PRO_0000453337" description="Trans-enoyl reductase pvhC">
    <location>
        <begin position="1"/>
        <end position="358"/>
    </location>
</feature>
<feature type="binding site" evidence="1">
    <location>
        <begin position="48"/>
        <end position="51"/>
    </location>
    <ligand>
        <name>NADP(+)</name>
        <dbReference type="ChEBI" id="CHEBI:58349"/>
    </ligand>
</feature>
<feature type="binding site" evidence="2">
    <location>
        <begin position="134"/>
        <end position="141"/>
    </location>
    <ligand>
        <name>substrate</name>
    </ligand>
</feature>
<feature type="binding site" evidence="1">
    <location>
        <begin position="169"/>
        <end position="172"/>
    </location>
    <ligand>
        <name>NADP(+)</name>
        <dbReference type="ChEBI" id="CHEBI:58349"/>
    </ligand>
</feature>
<feature type="binding site" evidence="1">
    <location>
        <begin position="192"/>
        <end position="195"/>
    </location>
    <ligand>
        <name>NADP(+)</name>
        <dbReference type="ChEBI" id="CHEBI:58349"/>
    </ligand>
</feature>
<feature type="binding site" evidence="1">
    <location>
        <position position="210"/>
    </location>
    <ligand>
        <name>NADP(+)</name>
        <dbReference type="ChEBI" id="CHEBI:58349"/>
    </ligand>
</feature>
<feature type="binding site" evidence="1">
    <location>
        <begin position="257"/>
        <end position="258"/>
    </location>
    <ligand>
        <name>NADP(+)</name>
        <dbReference type="ChEBI" id="CHEBI:58349"/>
    </ligand>
</feature>
<feature type="binding site" evidence="2">
    <location>
        <begin position="278"/>
        <end position="282"/>
    </location>
    <ligand>
        <name>substrate</name>
    </ligand>
</feature>
<feature type="binding site" evidence="1">
    <location>
        <begin position="347"/>
        <end position="348"/>
    </location>
    <ligand>
        <name>NADP(+)</name>
        <dbReference type="ChEBI" id="CHEBI:58349"/>
    </ligand>
</feature>